<dbReference type="EC" id="3.5.4.19" evidence="1"/>
<dbReference type="EMBL" id="CP000009">
    <property type="protein sequence ID" value="AAW61757.1"/>
    <property type="molecule type" value="Genomic_DNA"/>
</dbReference>
<dbReference type="SMR" id="Q5FPD9"/>
<dbReference type="STRING" id="290633.GOX2021"/>
<dbReference type="KEGG" id="gox:GOX2021"/>
<dbReference type="eggNOG" id="COG0139">
    <property type="taxonomic scope" value="Bacteria"/>
</dbReference>
<dbReference type="HOGENOM" id="CLU_048577_5_2_5"/>
<dbReference type="UniPathway" id="UPA00031">
    <property type="reaction ID" value="UER00008"/>
</dbReference>
<dbReference type="Proteomes" id="UP000006375">
    <property type="component" value="Chromosome"/>
</dbReference>
<dbReference type="GO" id="GO:0005737">
    <property type="term" value="C:cytoplasm"/>
    <property type="evidence" value="ECO:0007669"/>
    <property type="project" value="UniProtKB-SubCell"/>
</dbReference>
<dbReference type="GO" id="GO:0000287">
    <property type="term" value="F:magnesium ion binding"/>
    <property type="evidence" value="ECO:0007669"/>
    <property type="project" value="UniProtKB-UniRule"/>
</dbReference>
<dbReference type="GO" id="GO:0004635">
    <property type="term" value="F:phosphoribosyl-AMP cyclohydrolase activity"/>
    <property type="evidence" value="ECO:0007669"/>
    <property type="project" value="UniProtKB-UniRule"/>
</dbReference>
<dbReference type="GO" id="GO:0008270">
    <property type="term" value="F:zinc ion binding"/>
    <property type="evidence" value="ECO:0007669"/>
    <property type="project" value="UniProtKB-UniRule"/>
</dbReference>
<dbReference type="GO" id="GO:0000105">
    <property type="term" value="P:L-histidine biosynthetic process"/>
    <property type="evidence" value="ECO:0007669"/>
    <property type="project" value="UniProtKB-UniRule"/>
</dbReference>
<dbReference type="FunFam" id="3.10.20.810:FF:000001">
    <property type="entry name" value="Histidine biosynthesis bifunctional protein HisIE"/>
    <property type="match status" value="1"/>
</dbReference>
<dbReference type="Gene3D" id="3.10.20.810">
    <property type="entry name" value="Phosphoribosyl-AMP cyclohydrolase"/>
    <property type="match status" value="1"/>
</dbReference>
<dbReference type="HAMAP" id="MF_01021">
    <property type="entry name" value="HisI"/>
    <property type="match status" value="1"/>
</dbReference>
<dbReference type="InterPro" id="IPR026660">
    <property type="entry name" value="PRA-CH"/>
</dbReference>
<dbReference type="InterPro" id="IPR002496">
    <property type="entry name" value="PRib_AMP_CycHydrolase_dom"/>
</dbReference>
<dbReference type="InterPro" id="IPR038019">
    <property type="entry name" value="PRib_AMP_CycHydrolase_sf"/>
</dbReference>
<dbReference type="NCBIfam" id="NF000768">
    <property type="entry name" value="PRK00051.1"/>
    <property type="match status" value="1"/>
</dbReference>
<dbReference type="PANTHER" id="PTHR42945">
    <property type="entry name" value="HISTIDINE BIOSYNTHESIS BIFUNCTIONAL PROTEIN"/>
    <property type="match status" value="1"/>
</dbReference>
<dbReference type="PANTHER" id="PTHR42945:SF1">
    <property type="entry name" value="HISTIDINE BIOSYNTHESIS BIFUNCTIONAL PROTEIN HIS7"/>
    <property type="match status" value="1"/>
</dbReference>
<dbReference type="Pfam" id="PF01502">
    <property type="entry name" value="PRA-CH"/>
    <property type="match status" value="1"/>
</dbReference>
<dbReference type="SUPFAM" id="SSF141734">
    <property type="entry name" value="HisI-like"/>
    <property type="match status" value="1"/>
</dbReference>
<reference key="1">
    <citation type="journal article" date="2005" name="Nat. Biotechnol.">
        <title>Complete genome sequence of the acetic acid bacterium Gluconobacter oxydans.</title>
        <authorList>
            <person name="Prust C."/>
            <person name="Hoffmeister M."/>
            <person name="Liesegang H."/>
            <person name="Wiezer A."/>
            <person name="Fricke W.F."/>
            <person name="Ehrenreich A."/>
            <person name="Gottschalk G."/>
            <person name="Deppenmeier U."/>
        </authorList>
    </citation>
    <scope>NUCLEOTIDE SEQUENCE [LARGE SCALE GENOMIC DNA]</scope>
    <source>
        <strain>621H</strain>
    </source>
</reference>
<sequence length="156" mass="17207">MQWTAAFGSLARLVSRGDAFVTYVPPAPSIVDDIIAQVKFDANGLISALAQAPDGVVLMLAWMNADALRETLLTGRVCYWSRSRQKLWRKGETSGQQQKLIEARLDCDMDAVLMIVDQTGVACHTGRRSCFYHGVTPDGLRDTSQPEISAEELYGR</sequence>
<accession>Q5FPD9</accession>
<proteinExistence type="inferred from homology"/>
<evidence type="ECO:0000255" key="1">
    <source>
        <dbReference type="HAMAP-Rule" id="MF_01021"/>
    </source>
</evidence>
<name>HIS3_GLUOX</name>
<keyword id="KW-0028">Amino-acid biosynthesis</keyword>
<keyword id="KW-0963">Cytoplasm</keyword>
<keyword id="KW-0368">Histidine biosynthesis</keyword>
<keyword id="KW-0378">Hydrolase</keyword>
<keyword id="KW-0460">Magnesium</keyword>
<keyword id="KW-0479">Metal-binding</keyword>
<keyword id="KW-1185">Reference proteome</keyword>
<keyword id="KW-0862">Zinc</keyword>
<protein>
    <recommendedName>
        <fullName evidence="1">Phosphoribosyl-AMP cyclohydrolase</fullName>
        <shortName evidence="1">PRA-CH</shortName>
        <ecNumber evidence="1">3.5.4.19</ecNumber>
    </recommendedName>
</protein>
<organism>
    <name type="scientific">Gluconobacter oxydans (strain 621H)</name>
    <name type="common">Gluconobacter suboxydans</name>
    <dbReference type="NCBI Taxonomy" id="290633"/>
    <lineage>
        <taxon>Bacteria</taxon>
        <taxon>Pseudomonadati</taxon>
        <taxon>Pseudomonadota</taxon>
        <taxon>Alphaproteobacteria</taxon>
        <taxon>Acetobacterales</taxon>
        <taxon>Acetobacteraceae</taxon>
        <taxon>Gluconobacter</taxon>
    </lineage>
</organism>
<feature type="chain" id="PRO_0000229823" description="Phosphoribosyl-AMP cyclohydrolase">
    <location>
        <begin position="1"/>
        <end position="156"/>
    </location>
</feature>
<feature type="binding site" evidence="1">
    <location>
        <position position="106"/>
    </location>
    <ligand>
        <name>Mg(2+)</name>
        <dbReference type="ChEBI" id="CHEBI:18420"/>
    </ligand>
</feature>
<feature type="binding site" evidence="1">
    <location>
        <position position="107"/>
    </location>
    <ligand>
        <name>Zn(2+)</name>
        <dbReference type="ChEBI" id="CHEBI:29105"/>
        <note>ligand shared between dimeric partners</note>
    </ligand>
</feature>
<feature type="binding site" evidence="1">
    <location>
        <position position="108"/>
    </location>
    <ligand>
        <name>Mg(2+)</name>
        <dbReference type="ChEBI" id="CHEBI:18420"/>
    </ligand>
</feature>
<feature type="binding site" evidence="1">
    <location>
        <position position="110"/>
    </location>
    <ligand>
        <name>Mg(2+)</name>
        <dbReference type="ChEBI" id="CHEBI:18420"/>
    </ligand>
</feature>
<feature type="binding site" evidence="1">
    <location>
        <position position="123"/>
    </location>
    <ligand>
        <name>Zn(2+)</name>
        <dbReference type="ChEBI" id="CHEBI:29105"/>
        <note>ligand shared between dimeric partners</note>
    </ligand>
</feature>
<feature type="binding site" evidence="1">
    <location>
        <position position="130"/>
    </location>
    <ligand>
        <name>Zn(2+)</name>
        <dbReference type="ChEBI" id="CHEBI:29105"/>
        <note>ligand shared between dimeric partners</note>
    </ligand>
</feature>
<comment type="function">
    <text evidence="1">Catalyzes the hydrolysis of the adenine ring of phosphoribosyl-AMP.</text>
</comment>
<comment type="catalytic activity">
    <reaction evidence="1">
        <text>1-(5-phospho-beta-D-ribosyl)-5'-AMP + H2O = 1-(5-phospho-beta-D-ribosyl)-5-[(5-phospho-beta-D-ribosylamino)methylideneamino]imidazole-4-carboxamide</text>
        <dbReference type="Rhea" id="RHEA:20049"/>
        <dbReference type="ChEBI" id="CHEBI:15377"/>
        <dbReference type="ChEBI" id="CHEBI:58435"/>
        <dbReference type="ChEBI" id="CHEBI:59457"/>
        <dbReference type="EC" id="3.5.4.19"/>
    </reaction>
</comment>
<comment type="cofactor">
    <cofactor evidence="1">
        <name>Mg(2+)</name>
        <dbReference type="ChEBI" id="CHEBI:18420"/>
    </cofactor>
    <text evidence="1">Binds 1 Mg(2+) ion per subunit.</text>
</comment>
<comment type="cofactor">
    <cofactor evidence="1">
        <name>Zn(2+)</name>
        <dbReference type="ChEBI" id="CHEBI:29105"/>
    </cofactor>
    <text evidence="1">Binds 1 zinc ion per subunit.</text>
</comment>
<comment type="pathway">
    <text evidence="1">Amino-acid biosynthesis; L-histidine biosynthesis; L-histidine from 5-phospho-alpha-D-ribose 1-diphosphate: step 3/9.</text>
</comment>
<comment type="subunit">
    <text evidence="1">Homodimer.</text>
</comment>
<comment type="subcellular location">
    <subcellularLocation>
        <location evidence="1">Cytoplasm</location>
    </subcellularLocation>
</comment>
<comment type="similarity">
    <text evidence="1">Belongs to the PRA-CH family.</text>
</comment>
<gene>
    <name evidence="1" type="primary">hisI</name>
    <name type="ordered locus">GOX2021</name>
</gene>